<dbReference type="EC" id="4.1.1.23" evidence="1"/>
<dbReference type="EMBL" id="AM406670">
    <property type="protein sequence ID" value="CAL96275.1"/>
    <property type="molecule type" value="Genomic_DNA"/>
</dbReference>
<dbReference type="RefSeq" id="WP_011767381.1">
    <property type="nucleotide sequence ID" value="NC_008702.1"/>
</dbReference>
<dbReference type="SMR" id="A1KBR9"/>
<dbReference type="STRING" id="62928.azo3659"/>
<dbReference type="KEGG" id="azo:azo3659"/>
<dbReference type="eggNOG" id="COG0284">
    <property type="taxonomic scope" value="Bacteria"/>
</dbReference>
<dbReference type="HOGENOM" id="CLU_060704_1_0_4"/>
<dbReference type="UniPathway" id="UPA00070">
    <property type="reaction ID" value="UER00120"/>
</dbReference>
<dbReference type="Proteomes" id="UP000002588">
    <property type="component" value="Chromosome"/>
</dbReference>
<dbReference type="GO" id="GO:0004590">
    <property type="term" value="F:orotidine-5'-phosphate decarboxylase activity"/>
    <property type="evidence" value="ECO:0007669"/>
    <property type="project" value="UniProtKB-UniRule"/>
</dbReference>
<dbReference type="GO" id="GO:0006207">
    <property type="term" value="P:'de novo' pyrimidine nucleobase biosynthetic process"/>
    <property type="evidence" value="ECO:0007669"/>
    <property type="project" value="InterPro"/>
</dbReference>
<dbReference type="GO" id="GO:0044205">
    <property type="term" value="P:'de novo' UMP biosynthetic process"/>
    <property type="evidence" value="ECO:0007669"/>
    <property type="project" value="UniProtKB-UniRule"/>
</dbReference>
<dbReference type="CDD" id="cd04725">
    <property type="entry name" value="OMP_decarboxylase_like"/>
    <property type="match status" value="1"/>
</dbReference>
<dbReference type="Gene3D" id="3.20.20.70">
    <property type="entry name" value="Aldolase class I"/>
    <property type="match status" value="1"/>
</dbReference>
<dbReference type="HAMAP" id="MF_01215">
    <property type="entry name" value="OMPdecase_type2"/>
    <property type="match status" value="1"/>
</dbReference>
<dbReference type="InterPro" id="IPR013785">
    <property type="entry name" value="Aldolase_TIM"/>
</dbReference>
<dbReference type="InterPro" id="IPR018089">
    <property type="entry name" value="OMPdecase_AS"/>
</dbReference>
<dbReference type="InterPro" id="IPR011995">
    <property type="entry name" value="OMPdecase_type-2"/>
</dbReference>
<dbReference type="InterPro" id="IPR001754">
    <property type="entry name" value="OMPdeCOase_dom"/>
</dbReference>
<dbReference type="InterPro" id="IPR011060">
    <property type="entry name" value="RibuloseP-bd_barrel"/>
</dbReference>
<dbReference type="NCBIfam" id="TIGR02127">
    <property type="entry name" value="pyrF_sub2"/>
    <property type="match status" value="1"/>
</dbReference>
<dbReference type="PANTHER" id="PTHR43375">
    <property type="entry name" value="OROTIDINE 5'-PHOSPHATE DECARBOXYLASE"/>
    <property type="match status" value="1"/>
</dbReference>
<dbReference type="PANTHER" id="PTHR43375:SF1">
    <property type="entry name" value="OROTIDINE 5'-PHOSPHATE DECARBOXYLASE"/>
    <property type="match status" value="1"/>
</dbReference>
<dbReference type="Pfam" id="PF00215">
    <property type="entry name" value="OMPdecase"/>
    <property type="match status" value="1"/>
</dbReference>
<dbReference type="SMART" id="SM00934">
    <property type="entry name" value="OMPdecase"/>
    <property type="match status" value="1"/>
</dbReference>
<dbReference type="SUPFAM" id="SSF51366">
    <property type="entry name" value="Ribulose-phoshate binding barrel"/>
    <property type="match status" value="1"/>
</dbReference>
<dbReference type="PROSITE" id="PS00156">
    <property type="entry name" value="OMPDECASE"/>
    <property type="match status" value="1"/>
</dbReference>
<sequence length="270" mass="28828">MHFMTALRAAWQQRDSLLCVGLDPDPARFPAHLQGRPDAIFEFCAAIVDATADLVCSFKPQIAYFAARRAEDQLEALIDHIHAHHPGVPVILDAKRGDIGSTAEQYAVEAFERFKADAITVNPYMGRDSVDPYLAYPDKGVILLCRTSNPGGSDLQFLDVGGEKLYERVARLVAEDWNASGNCGLVVGATFPAEIARVRALTGEMPLLVPGIGAQGGDIEATVKAGRTAAGGGLMINSSRAILYAGKGEDFAAAARAAALQTRDAINAYR</sequence>
<organism>
    <name type="scientific">Azoarcus sp. (strain BH72)</name>
    <dbReference type="NCBI Taxonomy" id="418699"/>
    <lineage>
        <taxon>Bacteria</taxon>
        <taxon>Pseudomonadati</taxon>
        <taxon>Pseudomonadota</taxon>
        <taxon>Betaproteobacteria</taxon>
        <taxon>Rhodocyclales</taxon>
        <taxon>Zoogloeaceae</taxon>
        <taxon>Azoarcus</taxon>
    </lineage>
</organism>
<name>PYRF_AZOSB</name>
<proteinExistence type="inferred from homology"/>
<protein>
    <recommendedName>
        <fullName evidence="1">Orotidine 5'-phosphate decarboxylase</fullName>
        <ecNumber evidence="1">4.1.1.23</ecNumber>
    </recommendedName>
    <alternativeName>
        <fullName evidence="1">OMP decarboxylase</fullName>
        <shortName evidence="1">OMPDCase</shortName>
        <shortName evidence="1">OMPdecase</shortName>
    </alternativeName>
</protein>
<comment type="catalytic activity">
    <reaction evidence="1">
        <text>orotidine 5'-phosphate + H(+) = UMP + CO2</text>
        <dbReference type="Rhea" id="RHEA:11596"/>
        <dbReference type="ChEBI" id="CHEBI:15378"/>
        <dbReference type="ChEBI" id="CHEBI:16526"/>
        <dbReference type="ChEBI" id="CHEBI:57538"/>
        <dbReference type="ChEBI" id="CHEBI:57865"/>
        <dbReference type="EC" id="4.1.1.23"/>
    </reaction>
</comment>
<comment type="pathway">
    <text evidence="1">Pyrimidine metabolism; UMP biosynthesis via de novo pathway; UMP from orotate: step 2/2.</text>
</comment>
<comment type="similarity">
    <text evidence="1">Belongs to the OMP decarboxylase family. Type 2 subfamily.</text>
</comment>
<accession>A1KBR9</accession>
<feature type="chain" id="PRO_1000066454" description="Orotidine 5'-phosphate decarboxylase">
    <location>
        <begin position="1"/>
        <end position="270"/>
    </location>
</feature>
<feature type="active site" description="Proton donor" evidence="1">
    <location>
        <position position="95"/>
    </location>
</feature>
<gene>
    <name evidence="1" type="primary">pyrF</name>
    <name type="ordered locus">azo3659</name>
</gene>
<evidence type="ECO:0000255" key="1">
    <source>
        <dbReference type="HAMAP-Rule" id="MF_01215"/>
    </source>
</evidence>
<keyword id="KW-0210">Decarboxylase</keyword>
<keyword id="KW-0456">Lyase</keyword>
<keyword id="KW-0665">Pyrimidine biosynthesis</keyword>
<keyword id="KW-1185">Reference proteome</keyword>
<reference key="1">
    <citation type="journal article" date="2006" name="Nat. Biotechnol.">
        <title>Complete genome of the mutualistic, N2-fixing grass endophyte Azoarcus sp. strain BH72.</title>
        <authorList>
            <person name="Krause A."/>
            <person name="Ramakumar A."/>
            <person name="Bartels D."/>
            <person name="Battistoni F."/>
            <person name="Bekel T."/>
            <person name="Boch J."/>
            <person name="Boehm M."/>
            <person name="Friedrich F."/>
            <person name="Hurek T."/>
            <person name="Krause L."/>
            <person name="Linke B."/>
            <person name="McHardy A.C."/>
            <person name="Sarkar A."/>
            <person name="Schneiker S."/>
            <person name="Syed A.A."/>
            <person name="Thauer R."/>
            <person name="Vorhoelter F.-J."/>
            <person name="Weidner S."/>
            <person name="Puehler A."/>
            <person name="Reinhold-Hurek B."/>
            <person name="Kaiser O."/>
            <person name="Goesmann A."/>
        </authorList>
    </citation>
    <scope>NUCLEOTIDE SEQUENCE [LARGE SCALE GENOMIC DNA]</scope>
    <source>
        <strain>BH72</strain>
    </source>
</reference>